<reference key="1">
    <citation type="journal article" date="2006" name="Proc. Natl. Acad. Sci. U.S.A.">
        <title>Comparative genomics of the lactic acid bacteria.</title>
        <authorList>
            <person name="Makarova K.S."/>
            <person name="Slesarev A."/>
            <person name="Wolf Y.I."/>
            <person name="Sorokin A."/>
            <person name="Mirkin B."/>
            <person name="Koonin E.V."/>
            <person name="Pavlov A."/>
            <person name="Pavlova N."/>
            <person name="Karamychev V."/>
            <person name="Polouchine N."/>
            <person name="Shakhova V."/>
            <person name="Grigoriev I."/>
            <person name="Lou Y."/>
            <person name="Rohksar D."/>
            <person name="Lucas S."/>
            <person name="Huang K."/>
            <person name="Goodstein D.M."/>
            <person name="Hawkins T."/>
            <person name="Plengvidhya V."/>
            <person name="Welker D."/>
            <person name="Hughes J."/>
            <person name="Goh Y."/>
            <person name="Benson A."/>
            <person name="Baldwin K."/>
            <person name="Lee J.-H."/>
            <person name="Diaz-Muniz I."/>
            <person name="Dosti B."/>
            <person name="Smeianov V."/>
            <person name="Wechter W."/>
            <person name="Barabote R."/>
            <person name="Lorca G."/>
            <person name="Altermann E."/>
            <person name="Barrangou R."/>
            <person name="Ganesan B."/>
            <person name="Xie Y."/>
            <person name="Rawsthorne H."/>
            <person name="Tamir D."/>
            <person name="Parker C."/>
            <person name="Breidt F."/>
            <person name="Broadbent J.R."/>
            <person name="Hutkins R."/>
            <person name="O'Sullivan D."/>
            <person name="Steele J."/>
            <person name="Unlu G."/>
            <person name="Saier M.H. Jr."/>
            <person name="Klaenhammer T."/>
            <person name="Richardson P."/>
            <person name="Kozyavkin S."/>
            <person name="Weimer B.C."/>
            <person name="Mills D.A."/>
        </authorList>
    </citation>
    <scope>NUCLEOTIDE SEQUENCE [LARGE SCALE GENOMIC DNA]</scope>
    <source>
        <strain>ATCC 33323 / DSM 20243 / BCRC 14619 / CIP 102991 / JCM 1131 / KCTC 3163 / NCIMB 11718 / NCTC 13722 / AM63</strain>
    </source>
</reference>
<name>CCA_LACGA</name>
<organism>
    <name type="scientific">Lactobacillus gasseri (strain ATCC 33323 / DSM 20243 / BCRC 14619 / CIP 102991 / JCM 1131 / KCTC 3163 / NCIMB 11718 / NCTC 13722 / AM63)</name>
    <dbReference type="NCBI Taxonomy" id="324831"/>
    <lineage>
        <taxon>Bacteria</taxon>
        <taxon>Bacillati</taxon>
        <taxon>Bacillota</taxon>
        <taxon>Bacilli</taxon>
        <taxon>Lactobacillales</taxon>
        <taxon>Lactobacillaceae</taxon>
        <taxon>Lactobacillus</taxon>
    </lineage>
</organism>
<sequence length="398" mass="44736">MKITNLPEVFTAALPVLKRINEAGYEAYFVGGSVRDLLLNRHIHDVDIATSAYPMEIKQIFKKTIDTGIKHGTVTVLYEGESYEITTFRTESGYQDFRRPDHVTFVQNLSEDLKRRDFTINALAMGVDGNVIDHFDGLGDLDKHLIRAVGKAENRFHEDALRMMRAVRFMSQLQFTLEPETERAISDNHELLSKISVERIRDEFVKMGIAPGSQKAFQIFLDTGLSEEVPGFKGKKDNLALYPQLNFSPTTEANLWALMIILLKLPNEKIPSFMRMWKNSNAMERQVADIVTFFDLVSSRAPSNYDLYQAGLETIASTIDLAHILGQPINGSALVDRYEALPIKNNHDLVIDGHFLLKNGVPAGPRVGLLLEEIKKAVLEGVISNNEAAITEFLSLNN</sequence>
<comment type="function">
    <text evidence="1">Catalyzes the addition and repair of the essential 3'-terminal CCA sequence in tRNAs without using a nucleic acid template. Adds these three nucleotides in the order of C, C, and A to the tRNA nucleotide-73, using CTP and ATP as substrates and producing inorganic pyrophosphate. tRNA 3'-terminal CCA addition is required both for tRNA processing and repair. Also involved in tRNA surveillance by mediating tandem CCA addition to generate a CCACCA at the 3' terminus of unstable tRNAs. While stable tRNAs receive only 3'-terminal CCA, unstable tRNAs are marked with CCACCA and rapidly degraded.</text>
</comment>
<comment type="catalytic activity">
    <reaction evidence="1">
        <text>a tRNA precursor + 2 CTP + ATP = a tRNA with a 3' CCA end + 3 diphosphate</text>
        <dbReference type="Rhea" id="RHEA:14433"/>
        <dbReference type="Rhea" id="RHEA-COMP:10465"/>
        <dbReference type="Rhea" id="RHEA-COMP:10468"/>
        <dbReference type="ChEBI" id="CHEBI:30616"/>
        <dbReference type="ChEBI" id="CHEBI:33019"/>
        <dbReference type="ChEBI" id="CHEBI:37563"/>
        <dbReference type="ChEBI" id="CHEBI:74896"/>
        <dbReference type="ChEBI" id="CHEBI:83071"/>
        <dbReference type="EC" id="2.7.7.72"/>
    </reaction>
</comment>
<comment type="catalytic activity">
    <reaction evidence="1">
        <text>a tRNA with a 3' CCA end + 2 CTP + ATP = a tRNA with a 3' CCACCA end + 3 diphosphate</text>
        <dbReference type="Rhea" id="RHEA:76235"/>
        <dbReference type="Rhea" id="RHEA-COMP:10468"/>
        <dbReference type="Rhea" id="RHEA-COMP:18655"/>
        <dbReference type="ChEBI" id="CHEBI:30616"/>
        <dbReference type="ChEBI" id="CHEBI:33019"/>
        <dbReference type="ChEBI" id="CHEBI:37563"/>
        <dbReference type="ChEBI" id="CHEBI:83071"/>
        <dbReference type="ChEBI" id="CHEBI:195187"/>
    </reaction>
    <physiologicalReaction direction="left-to-right" evidence="1">
        <dbReference type="Rhea" id="RHEA:76236"/>
    </physiologicalReaction>
</comment>
<comment type="cofactor">
    <cofactor evidence="1">
        <name>Mg(2+)</name>
        <dbReference type="ChEBI" id="CHEBI:18420"/>
    </cofactor>
</comment>
<comment type="subunit">
    <text evidence="1">Homodimer.</text>
</comment>
<comment type="miscellaneous">
    <text evidence="1">A single active site specifically recognizes both ATP and CTP and is responsible for their addition.</text>
</comment>
<comment type="similarity">
    <text evidence="1">Belongs to the tRNA nucleotidyltransferase/poly(A) polymerase family. Bacterial CCA-adding enzyme type 3 subfamily.</text>
</comment>
<gene>
    <name evidence="1" type="primary">cca</name>
    <name type="ordered locus">LGAS_0908</name>
</gene>
<evidence type="ECO:0000255" key="1">
    <source>
        <dbReference type="HAMAP-Rule" id="MF_01263"/>
    </source>
</evidence>
<accession>Q043S5</accession>
<dbReference type="EC" id="2.7.7.72" evidence="1"/>
<dbReference type="EMBL" id="CP000413">
    <property type="protein sequence ID" value="ABJ60297.1"/>
    <property type="molecule type" value="Genomic_DNA"/>
</dbReference>
<dbReference type="RefSeq" id="WP_003647382.1">
    <property type="nucleotide sequence ID" value="NZ_WBMG01000014.1"/>
</dbReference>
<dbReference type="SMR" id="Q043S5"/>
<dbReference type="GeneID" id="29638926"/>
<dbReference type="KEGG" id="lga:LGAS_0908"/>
<dbReference type="HOGENOM" id="CLU_015961_3_0_9"/>
<dbReference type="BioCyc" id="LGAS324831:G1G6Y-902-MONOMER"/>
<dbReference type="Proteomes" id="UP000000664">
    <property type="component" value="Chromosome"/>
</dbReference>
<dbReference type="GO" id="GO:0005524">
    <property type="term" value="F:ATP binding"/>
    <property type="evidence" value="ECO:0007669"/>
    <property type="project" value="UniProtKB-UniRule"/>
</dbReference>
<dbReference type="GO" id="GO:0004810">
    <property type="term" value="F:CCA tRNA nucleotidyltransferase activity"/>
    <property type="evidence" value="ECO:0007669"/>
    <property type="project" value="UniProtKB-UniRule"/>
</dbReference>
<dbReference type="GO" id="GO:0000287">
    <property type="term" value="F:magnesium ion binding"/>
    <property type="evidence" value="ECO:0007669"/>
    <property type="project" value="UniProtKB-UniRule"/>
</dbReference>
<dbReference type="GO" id="GO:0000049">
    <property type="term" value="F:tRNA binding"/>
    <property type="evidence" value="ECO:0007669"/>
    <property type="project" value="UniProtKB-UniRule"/>
</dbReference>
<dbReference type="GO" id="GO:0042245">
    <property type="term" value="P:RNA repair"/>
    <property type="evidence" value="ECO:0007669"/>
    <property type="project" value="UniProtKB-KW"/>
</dbReference>
<dbReference type="GO" id="GO:0001680">
    <property type="term" value="P:tRNA 3'-terminal CCA addition"/>
    <property type="evidence" value="ECO:0007669"/>
    <property type="project" value="UniProtKB-UniRule"/>
</dbReference>
<dbReference type="CDD" id="cd05398">
    <property type="entry name" value="NT_ClassII-CCAase"/>
    <property type="match status" value="1"/>
</dbReference>
<dbReference type="Gene3D" id="1.10.110.30">
    <property type="match status" value="1"/>
</dbReference>
<dbReference type="Gene3D" id="1.10.246.80">
    <property type="match status" value="1"/>
</dbReference>
<dbReference type="Gene3D" id="1.20.58.560">
    <property type="match status" value="1"/>
</dbReference>
<dbReference type="Gene3D" id="3.30.460.10">
    <property type="entry name" value="Beta Polymerase, domain 2"/>
    <property type="match status" value="1"/>
</dbReference>
<dbReference type="HAMAP" id="MF_01263">
    <property type="entry name" value="CCA_bact_type3"/>
    <property type="match status" value="1"/>
</dbReference>
<dbReference type="InterPro" id="IPR050264">
    <property type="entry name" value="Bact_CCA-adding_enz_type3_sf"/>
</dbReference>
<dbReference type="InterPro" id="IPR032810">
    <property type="entry name" value="CCA-adding_enz_C"/>
</dbReference>
<dbReference type="InterPro" id="IPR023068">
    <property type="entry name" value="CCA-adding_enz_firmicutes"/>
</dbReference>
<dbReference type="InterPro" id="IPR043519">
    <property type="entry name" value="NT_sf"/>
</dbReference>
<dbReference type="InterPro" id="IPR002646">
    <property type="entry name" value="PolA_pol_head_dom"/>
</dbReference>
<dbReference type="InterPro" id="IPR032828">
    <property type="entry name" value="PolyA_RNA-bd"/>
</dbReference>
<dbReference type="NCBIfam" id="NF009814">
    <property type="entry name" value="PRK13299.1"/>
    <property type="match status" value="1"/>
</dbReference>
<dbReference type="PANTHER" id="PTHR46173">
    <property type="entry name" value="CCA TRNA NUCLEOTIDYLTRANSFERASE 1, MITOCHONDRIAL"/>
    <property type="match status" value="1"/>
</dbReference>
<dbReference type="PANTHER" id="PTHR46173:SF1">
    <property type="entry name" value="CCA TRNA NUCLEOTIDYLTRANSFERASE 1, MITOCHONDRIAL"/>
    <property type="match status" value="1"/>
</dbReference>
<dbReference type="Pfam" id="PF01743">
    <property type="entry name" value="PolyA_pol"/>
    <property type="match status" value="1"/>
</dbReference>
<dbReference type="Pfam" id="PF12627">
    <property type="entry name" value="PolyA_pol_RNAbd"/>
    <property type="match status" value="1"/>
</dbReference>
<dbReference type="Pfam" id="PF13735">
    <property type="entry name" value="tRNA_NucTran2_2"/>
    <property type="match status" value="1"/>
</dbReference>
<dbReference type="SUPFAM" id="SSF81301">
    <property type="entry name" value="Nucleotidyltransferase"/>
    <property type="match status" value="1"/>
</dbReference>
<dbReference type="SUPFAM" id="SSF81891">
    <property type="entry name" value="Poly A polymerase C-terminal region-like"/>
    <property type="match status" value="1"/>
</dbReference>
<protein>
    <recommendedName>
        <fullName evidence="1">CCA-adding enzyme</fullName>
        <ecNumber evidence="1">2.7.7.72</ecNumber>
    </recommendedName>
    <alternativeName>
        <fullName evidence="1">CCA tRNA nucleotidyltransferase</fullName>
    </alternativeName>
    <alternativeName>
        <fullName evidence="1">tRNA CCA-pyrophosphorylase</fullName>
    </alternativeName>
    <alternativeName>
        <fullName evidence="1">tRNA adenylyl-/cytidylyl- transferase</fullName>
    </alternativeName>
    <alternativeName>
        <fullName evidence="1">tRNA nucleotidyltransferase</fullName>
    </alternativeName>
    <alternativeName>
        <fullName evidence="1">tRNA-NT</fullName>
    </alternativeName>
</protein>
<feature type="chain" id="PRO_1000054325" description="CCA-adding enzyme">
    <location>
        <begin position="1"/>
        <end position="398"/>
    </location>
</feature>
<feature type="binding site" evidence="1">
    <location>
        <position position="32"/>
    </location>
    <ligand>
        <name>ATP</name>
        <dbReference type="ChEBI" id="CHEBI:30616"/>
    </ligand>
</feature>
<feature type="binding site" evidence="1">
    <location>
        <position position="32"/>
    </location>
    <ligand>
        <name>CTP</name>
        <dbReference type="ChEBI" id="CHEBI:37563"/>
    </ligand>
</feature>
<feature type="binding site" evidence="1">
    <location>
        <position position="35"/>
    </location>
    <ligand>
        <name>ATP</name>
        <dbReference type="ChEBI" id="CHEBI:30616"/>
    </ligand>
</feature>
<feature type="binding site" evidence="1">
    <location>
        <position position="35"/>
    </location>
    <ligand>
        <name>CTP</name>
        <dbReference type="ChEBI" id="CHEBI:37563"/>
    </ligand>
</feature>
<feature type="binding site" evidence="1">
    <location>
        <position position="45"/>
    </location>
    <ligand>
        <name>Mg(2+)</name>
        <dbReference type="ChEBI" id="CHEBI:18420"/>
    </ligand>
</feature>
<feature type="binding site" evidence="1">
    <location>
        <position position="47"/>
    </location>
    <ligand>
        <name>Mg(2+)</name>
        <dbReference type="ChEBI" id="CHEBI:18420"/>
    </ligand>
</feature>
<feature type="binding site" evidence="1">
    <location>
        <position position="116"/>
    </location>
    <ligand>
        <name>ATP</name>
        <dbReference type="ChEBI" id="CHEBI:30616"/>
    </ligand>
</feature>
<feature type="binding site" evidence="1">
    <location>
        <position position="116"/>
    </location>
    <ligand>
        <name>CTP</name>
        <dbReference type="ChEBI" id="CHEBI:37563"/>
    </ligand>
</feature>
<feature type="binding site" evidence="1">
    <location>
        <position position="159"/>
    </location>
    <ligand>
        <name>ATP</name>
        <dbReference type="ChEBI" id="CHEBI:30616"/>
    </ligand>
</feature>
<feature type="binding site" evidence="1">
    <location>
        <position position="159"/>
    </location>
    <ligand>
        <name>CTP</name>
        <dbReference type="ChEBI" id="CHEBI:37563"/>
    </ligand>
</feature>
<feature type="binding site" evidence="1">
    <location>
        <position position="162"/>
    </location>
    <ligand>
        <name>ATP</name>
        <dbReference type="ChEBI" id="CHEBI:30616"/>
    </ligand>
</feature>
<feature type="binding site" evidence="1">
    <location>
        <position position="162"/>
    </location>
    <ligand>
        <name>CTP</name>
        <dbReference type="ChEBI" id="CHEBI:37563"/>
    </ligand>
</feature>
<feature type="binding site" evidence="1">
    <location>
        <position position="165"/>
    </location>
    <ligand>
        <name>ATP</name>
        <dbReference type="ChEBI" id="CHEBI:30616"/>
    </ligand>
</feature>
<feature type="binding site" evidence="1">
    <location>
        <position position="165"/>
    </location>
    <ligand>
        <name>CTP</name>
        <dbReference type="ChEBI" id="CHEBI:37563"/>
    </ligand>
</feature>
<feature type="binding site" evidence="1">
    <location>
        <position position="168"/>
    </location>
    <ligand>
        <name>ATP</name>
        <dbReference type="ChEBI" id="CHEBI:30616"/>
    </ligand>
</feature>
<feature type="binding site" evidence="1">
    <location>
        <position position="168"/>
    </location>
    <ligand>
        <name>CTP</name>
        <dbReference type="ChEBI" id="CHEBI:37563"/>
    </ligand>
</feature>
<proteinExistence type="inferred from homology"/>
<keyword id="KW-0067">ATP-binding</keyword>
<keyword id="KW-0460">Magnesium</keyword>
<keyword id="KW-0479">Metal-binding</keyword>
<keyword id="KW-0547">Nucleotide-binding</keyword>
<keyword id="KW-0548">Nucleotidyltransferase</keyword>
<keyword id="KW-0692">RNA repair</keyword>
<keyword id="KW-0694">RNA-binding</keyword>
<keyword id="KW-0808">Transferase</keyword>
<keyword id="KW-0819">tRNA processing</keyword>